<proteinExistence type="inferred from homology"/>
<accession>P41654</accession>
<comment type="function">
    <text evidence="1">Catalyzes the conversion of N5-carboxyaminoimidazole ribonucleotide (N5-CAIR) to 4-carboxy-5-aminoimidazole ribonucleotide (CAIR).</text>
</comment>
<comment type="catalytic activity">
    <reaction evidence="1">
        <text>5-carboxyamino-1-(5-phospho-D-ribosyl)imidazole + H(+) = 5-amino-1-(5-phospho-D-ribosyl)imidazole-4-carboxylate</text>
        <dbReference type="Rhea" id="RHEA:13193"/>
        <dbReference type="ChEBI" id="CHEBI:15378"/>
        <dbReference type="ChEBI" id="CHEBI:58730"/>
        <dbReference type="ChEBI" id="CHEBI:77657"/>
        <dbReference type="EC" id="5.4.99.18"/>
    </reaction>
</comment>
<comment type="pathway">
    <text evidence="1">Purine metabolism; IMP biosynthesis via de novo pathway; 5-amino-1-(5-phospho-D-ribosyl)imidazole-4-carboxylate from 5-amino-1-(5-phospho-D-ribosyl)imidazole (N5-CAIR route): step 2/2.</text>
</comment>
<comment type="similarity">
    <text evidence="1">Belongs to the AIR carboxylase family. Class I subfamily.</text>
</comment>
<comment type="sequence caution" evidence="2">
    <conflict type="erroneous initiation">
        <sequence resource="EMBL-CDS" id="AAB85870"/>
    </conflict>
    <text>Extended N-terminus.</text>
</comment>
<dbReference type="EC" id="5.4.99.18" evidence="1"/>
<dbReference type="EMBL" id="X03250">
    <property type="protein sequence ID" value="CAA27010.1"/>
    <property type="molecule type" value="Genomic_DNA"/>
</dbReference>
<dbReference type="EMBL" id="AE000666">
    <property type="protein sequence ID" value="AAB85870.1"/>
    <property type="status" value="ALT_INIT"/>
    <property type="molecule type" value="Genomic_DNA"/>
</dbReference>
<dbReference type="PIR" id="D69052">
    <property type="entry name" value="D69052"/>
</dbReference>
<dbReference type="RefSeq" id="WP_048061041.1">
    <property type="nucleotide sequence ID" value="NC_000916.1"/>
</dbReference>
<dbReference type="SMR" id="P41654"/>
<dbReference type="STRING" id="187420.MTH_1393"/>
<dbReference type="PaxDb" id="187420-MTH_1393"/>
<dbReference type="EnsemblBacteria" id="AAB85870">
    <property type="protein sequence ID" value="AAB85870"/>
    <property type="gene ID" value="MTH_1393"/>
</dbReference>
<dbReference type="GeneID" id="1471110"/>
<dbReference type="GeneID" id="77401915"/>
<dbReference type="KEGG" id="mth:MTH_1393"/>
<dbReference type="PATRIC" id="fig|187420.15.peg.1358"/>
<dbReference type="HOGENOM" id="CLU_782152_0_0_2"/>
<dbReference type="InParanoid" id="P41654"/>
<dbReference type="UniPathway" id="UPA00074">
    <property type="reaction ID" value="UER00943"/>
</dbReference>
<dbReference type="Proteomes" id="UP000005223">
    <property type="component" value="Chromosome"/>
</dbReference>
<dbReference type="GO" id="GO:0034023">
    <property type="term" value="F:5-(carboxyamino)imidazole ribonucleotide mutase activity"/>
    <property type="evidence" value="ECO:0007669"/>
    <property type="project" value="UniProtKB-UniRule"/>
</dbReference>
<dbReference type="GO" id="GO:0006189">
    <property type="term" value="P:'de novo' IMP biosynthetic process"/>
    <property type="evidence" value="ECO:0007669"/>
    <property type="project" value="UniProtKB-UniRule"/>
</dbReference>
<dbReference type="Gene3D" id="3.40.50.1970">
    <property type="match status" value="2"/>
</dbReference>
<dbReference type="HAMAP" id="MF_01929">
    <property type="entry name" value="PurE_classI"/>
    <property type="match status" value="2"/>
</dbReference>
<dbReference type="InterPro" id="IPR033747">
    <property type="entry name" value="PurE_ClassI"/>
</dbReference>
<dbReference type="InterPro" id="IPR000031">
    <property type="entry name" value="PurE_dom"/>
</dbReference>
<dbReference type="InterPro" id="IPR024694">
    <property type="entry name" value="PurE_prokaryotes"/>
</dbReference>
<dbReference type="NCBIfam" id="TIGR01162">
    <property type="entry name" value="purE"/>
    <property type="match status" value="2"/>
</dbReference>
<dbReference type="PANTHER" id="PTHR23046:SF2">
    <property type="entry name" value="PHOSPHORIBOSYLAMINOIMIDAZOLE CARBOXYLASE"/>
    <property type="match status" value="1"/>
</dbReference>
<dbReference type="PANTHER" id="PTHR23046">
    <property type="entry name" value="PHOSPHORIBOSYLAMINOIMIDAZOLE CARBOXYLASE CATALYTIC SUBUNIT"/>
    <property type="match status" value="1"/>
</dbReference>
<dbReference type="Pfam" id="PF00731">
    <property type="entry name" value="AIRC"/>
    <property type="match status" value="2"/>
</dbReference>
<dbReference type="SMART" id="SM01001">
    <property type="entry name" value="AIRC"/>
    <property type="match status" value="2"/>
</dbReference>
<dbReference type="SUPFAM" id="SSF52255">
    <property type="entry name" value="N5-CAIR mutase (phosphoribosylaminoimidazole carboxylase, PurE)"/>
    <property type="match status" value="2"/>
</dbReference>
<keyword id="KW-0413">Isomerase</keyword>
<keyword id="KW-0658">Purine biosynthesis</keyword>
<keyword id="KW-1185">Reference proteome</keyword>
<name>PURE_METTH</name>
<protein>
    <recommendedName>
        <fullName evidence="2">Probable N5-carboxyaminoimidazole ribonucleotide mutase</fullName>
        <shortName evidence="1">N5-CAIR mutase</shortName>
        <ecNumber evidence="1">5.4.99.18</ecNumber>
    </recommendedName>
    <alternativeName>
        <fullName evidence="1">5-(carboxyamino)imidazole ribonucleotide mutase</fullName>
    </alternativeName>
</protein>
<gene>
    <name evidence="1" type="primary">purE</name>
    <name type="ordered locus">MTH_1393</name>
</gene>
<feature type="chain" id="PRO_0000074992" description="Probable N5-carboxyaminoimidazole ribonucleotide mutase">
    <location>
        <begin position="1"/>
        <end position="334"/>
    </location>
</feature>
<feature type="binding site" evidence="1">
    <location>
        <position position="11"/>
    </location>
    <ligand>
        <name>substrate</name>
    </ligand>
</feature>
<feature type="binding site" evidence="1">
    <location>
        <position position="14"/>
    </location>
    <ligand>
        <name>substrate</name>
    </ligand>
</feature>
<feature type="binding site" evidence="1">
    <location>
        <position position="41"/>
    </location>
    <ligand>
        <name>substrate</name>
    </ligand>
</feature>
<evidence type="ECO:0000255" key="1">
    <source>
        <dbReference type="HAMAP-Rule" id="MF_01929"/>
    </source>
</evidence>
<evidence type="ECO:0000305" key="2"/>
<sequence>MKPRVMILLGSASDFRIAEKAMEIFEELRIPYDLRVASAHRTHEKVKAIVSEAVKAGVEVFIGIAGLSAHLPGMISANTHRPVIGVPVDVKLGGLDALFACSQMPFPAPVATVGVDRGENAAILAAQIIGIGDPGVRERVADLRRGFYERVRRDECQVLNSIEGSYYAPLEVEMPPIGDKVPSDSQDDPMVSVIPGSYSDMKIAKKTTMFLERMGISYDLNVISPIRYPERFERYLEKMENVKLFIAISGLSAHVTGAVVALSDRPVIGVPCPLKMNGWDSLLSMINMPPGVPVGTVGVGNGGNAAILAAEMLGIYDEKIESRIKRIKSRSVKF</sequence>
<reference key="1">
    <citation type="journal article" date="1985" name="J. Mol. Evol.">
        <title>Sequence divergence of an archaebacterial gene cloned from a mesophilic and a thermophilic methanogen.</title>
        <authorList>
            <person name="Hamilton P.T."/>
            <person name="Reeve J.N."/>
        </authorList>
    </citation>
    <scope>NUCLEOTIDE SEQUENCE [GENOMIC DNA]</scope>
    <source>
        <strain>ATCC 29096 / DSM 1053 / JCM 10044 / NBRC 100330 / Delta H</strain>
    </source>
</reference>
<reference key="2">
    <citation type="journal article" date="1997" name="J. Bacteriol.">
        <title>Complete genome sequence of Methanobacterium thermoautotrophicum deltaH: functional analysis and comparative genomics.</title>
        <authorList>
            <person name="Smith D.R."/>
            <person name="Doucette-Stamm L.A."/>
            <person name="Deloughery C."/>
            <person name="Lee H.-M."/>
            <person name="Dubois J."/>
            <person name="Aldredge T."/>
            <person name="Bashirzadeh R."/>
            <person name="Blakely D."/>
            <person name="Cook R."/>
            <person name="Gilbert K."/>
            <person name="Harrison D."/>
            <person name="Hoang L."/>
            <person name="Keagle P."/>
            <person name="Lumm W."/>
            <person name="Pothier B."/>
            <person name="Qiu D."/>
            <person name="Spadafora R."/>
            <person name="Vicare R."/>
            <person name="Wang Y."/>
            <person name="Wierzbowski J."/>
            <person name="Gibson R."/>
            <person name="Jiwani N."/>
            <person name="Caruso A."/>
            <person name="Bush D."/>
            <person name="Safer H."/>
            <person name="Patwell D."/>
            <person name="Prabhakar S."/>
            <person name="McDougall S."/>
            <person name="Shimer G."/>
            <person name="Goyal A."/>
            <person name="Pietrovski S."/>
            <person name="Church G.M."/>
            <person name="Daniels C.J."/>
            <person name="Mao J.-I."/>
            <person name="Rice P."/>
            <person name="Noelling J."/>
            <person name="Reeve J.N."/>
        </authorList>
    </citation>
    <scope>NUCLEOTIDE SEQUENCE [LARGE SCALE GENOMIC DNA]</scope>
    <source>
        <strain>ATCC 29096 / DSM 1053 / JCM 10044 / NBRC 100330 / Delta H</strain>
    </source>
</reference>
<organism>
    <name type="scientific">Methanothermobacter thermautotrophicus (strain ATCC 29096 / DSM 1053 / JCM 10044 / NBRC 100330 / Delta H)</name>
    <name type="common">Methanobacterium thermoautotrophicum</name>
    <dbReference type="NCBI Taxonomy" id="187420"/>
    <lineage>
        <taxon>Archaea</taxon>
        <taxon>Methanobacteriati</taxon>
        <taxon>Methanobacteriota</taxon>
        <taxon>Methanomada group</taxon>
        <taxon>Methanobacteria</taxon>
        <taxon>Methanobacteriales</taxon>
        <taxon>Methanobacteriaceae</taxon>
        <taxon>Methanothermobacter</taxon>
    </lineage>
</organism>